<keyword id="KW-0687">Ribonucleoprotein</keyword>
<keyword id="KW-0689">Ribosomal protein</keyword>
<keyword id="KW-0694">RNA-binding</keyword>
<keyword id="KW-0699">rRNA-binding</keyword>
<name>RS4_BACC1</name>
<proteinExistence type="inferred from homology"/>
<protein>
    <recommendedName>
        <fullName evidence="1">Small ribosomal subunit protein uS4</fullName>
    </recommendedName>
    <alternativeName>
        <fullName evidence="3">30S ribosomal protein S4</fullName>
    </alternativeName>
</protein>
<sequence>MARYTGPAWKLSRRLGISLSGTGKELEKRPYAPGPHGPNQRKKLSEYGLQLQEKQKLRHMYGMTERQFRRTFDQAGKMPGKHGENFMILLEARLDNLVYRMGLARTRRAARQLVNHGHIMVDGARVDIPSYRVKPGQTISVREKSNNLVVVKEAIEVNNFVPEYLTFDADKLEATYTRHAERAELPAEINEALIVEFYSR</sequence>
<dbReference type="EMBL" id="AE017194">
    <property type="protein sequence ID" value="AAS43694.1"/>
    <property type="molecule type" value="Genomic_DNA"/>
</dbReference>
<dbReference type="SMR" id="Q72Z76"/>
<dbReference type="KEGG" id="bca:BCE_4793"/>
<dbReference type="HOGENOM" id="CLU_092403_0_1_9"/>
<dbReference type="Proteomes" id="UP000002527">
    <property type="component" value="Chromosome"/>
</dbReference>
<dbReference type="GO" id="GO:0015935">
    <property type="term" value="C:small ribosomal subunit"/>
    <property type="evidence" value="ECO:0007669"/>
    <property type="project" value="InterPro"/>
</dbReference>
<dbReference type="GO" id="GO:0019843">
    <property type="term" value="F:rRNA binding"/>
    <property type="evidence" value="ECO:0007669"/>
    <property type="project" value="UniProtKB-UniRule"/>
</dbReference>
<dbReference type="GO" id="GO:0003735">
    <property type="term" value="F:structural constituent of ribosome"/>
    <property type="evidence" value="ECO:0007669"/>
    <property type="project" value="InterPro"/>
</dbReference>
<dbReference type="GO" id="GO:0042274">
    <property type="term" value="P:ribosomal small subunit biogenesis"/>
    <property type="evidence" value="ECO:0007669"/>
    <property type="project" value="TreeGrafter"/>
</dbReference>
<dbReference type="GO" id="GO:0006412">
    <property type="term" value="P:translation"/>
    <property type="evidence" value="ECO:0007669"/>
    <property type="project" value="UniProtKB-UniRule"/>
</dbReference>
<dbReference type="CDD" id="cd00165">
    <property type="entry name" value="S4"/>
    <property type="match status" value="1"/>
</dbReference>
<dbReference type="FunFam" id="1.10.1050.10:FF:000001">
    <property type="entry name" value="30S ribosomal protein S4"/>
    <property type="match status" value="1"/>
</dbReference>
<dbReference type="FunFam" id="3.10.290.10:FF:000001">
    <property type="entry name" value="30S ribosomal protein S4"/>
    <property type="match status" value="1"/>
</dbReference>
<dbReference type="Gene3D" id="1.10.1050.10">
    <property type="entry name" value="Ribosomal Protein S4 Delta 41, Chain A, domain 1"/>
    <property type="match status" value="1"/>
</dbReference>
<dbReference type="Gene3D" id="3.10.290.10">
    <property type="entry name" value="RNA-binding S4 domain"/>
    <property type="match status" value="1"/>
</dbReference>
<dbReference type="HAMAP" id="MF_01306_B">
    <property type="entry name" value="Ribosomal_uS4_B"/>
    <property type="match status" value="1"/>
</dbReference>
<dbReference type="InterPro" id="IPR022801">
    <property type="entry name" value="Ribosomal_uS4"/>
</dbReference>
<dbReference type="InterPro" id="IPR005709">
    <property type="entry name" value="Ribosomal_uS4_bac-type"/>
</dbReference>
<dbReference type="InterPro" id="IPR018079">
    <property type="entry name" value="Ribosomal_uS4_CS"/>
</dbReference>
<dbReference type="InterPro" id="IPR001912">
    <property type="entry name" value="Ribosomal_uS4_N"/>
</dbReference>
<dbReference type="InterPro" id="IPR002942">
    <property type="entry name" value="S4_RNA-bd"/>
</dbReference>
<dbReference type="InterPro" id="IPR036986">
    <property type="entry name" value="S4_RNA-bd_sf"/>
</dbReference>
<dbReference type="NCBIfam" id="NF003717">
    <property type="entry name" value="PRK05327.1"/>
    <property type="match status" value="1"/>
</dbReference>
<dbReference type="NCBIfam" id="TIGR01017">
    <property type="entry name" value="rpsD_bact"/>
    <property type="match status" value="1"/>
</dbReference>
<dbReference type="PANTHER" id="PTHR11831">
    <property type="entry name" value="30S 40S RIBOSOMAL PROTEIN"/>
    <property type="match status" value="1"/>
</dbReference>
<dbReference type="PANTHER" id="PTHR11831:SF4">
    <property type="entry name" value="SMALL RIBOSOMAL SUBUNIT PROTEIN US4M"/>
    <property type="match status" value="1"/>
</dbReference>
<dbReference type="Pfam" id="PF00163">
    <property type="entry name" value="Ribosomal_S4"/>
    <property type="match status" value="1"/>
</dbReference>
<dbReference type="Pfam" id="PF01479">
    <property type="entry name" value="S4"/>
    <property type="match status" value="1"/>
</dbReference>
<dbReference type="SMART" id="SM01390">
    <property type="entry name" value="Ribosomal_S4"/>
    <property type="match status" value="1"/>
</dbReference>
<dbReference type="SMART" id="SM00363">
    <property type="entry name" value="S4"/>
    <property type="match status" value="1"/>
</dbReference>
<dbReference type="SUPFAM" id="SSF55174">
    <property type="entry name" value="Alpha-L RNA-binding motif"/>
    <property type="match status" value="1"/>
</dbReference>
<dbReference type="PROSITE" id="PS00632">
    <property type="entry name" value="RIBOSOMAL_S4"/>
    <property type="match status" value="1"/>
</dbReference>
<dbReference type="PROSITE" id="PS50889">
    <property type="entry name" value="S4"/>
    <property type="match status" value="1"/>
</dbReference>
<organism>
    <name type="scientific">Bacillus cereus (strain ATCC 10987 / NRS 248)</name>
    <dbReference type="NCBI Taxonomy" id="222523"/>
    <lineage>
        <taxon>Bacteria</taxon>
        <taxon>Bacillati</taxon>
        <taxon>Bacillota</taxon>
        <taxon>Bacilli</taxon>
        <taxon>Bacillales</taxon>
        <taxon>Bacillaceae</taxon>
        <taxon>Bacillus</taxon>
        <taxon>Bacillus cereus group</taxon>
    </lineage>
</organism>
<feature type="chain" id="PRO_0000132331" description="Small ribosomal subunit protein uS4">
    <location>
        <begin position="1"/>
        <end position="200"/>
    </location>
</feature>
<feature type="domain" description="S4 RNA-binding" evidence="1">
    <location>
        <begin position="92"/>
        <end position="152"/>
    </location>
</feature>
<feature type="region of interest" description="Disordered" evidence="2">
    <location>
        <begin position="22"/>
        <end position="42"/>
    </location>
</feature>
<comment type="function">
    <text evidence="1">One of the primary rRNA binding proteins, it binds directly to 16S rRNA where it nucleates assembly of the body of the 30S subunit.</text>
</comment>
<comment type="function">
    <text evidence="1">With S5 and S12 plays an important role in translational accuracy.</text>
</comment>
<comment type="subunit">
    <text evidence="1">Part of the 30S ribosomal subunit. Contacts protein S5. The interaction surface between S4 and S5 is involved in control of translational fidelity.</text>
</comment>
<comment type="similarity">
    <text evidence="1">Belongs to the universal ribosomal protein uS4 family.</text>
</comment>
<reference key="1">
    <citation type="journal article" date="2004" name="Nucleic Acids Res.">
        <title>The genome sequence of Bacillus cereus ATCC 10987 reveals metabolic adaptations and a large plasmid related to Bacillus anthracis pXO1.</title>
        <authorList>
            <person name="Rasko D.A."/>
            <person name="Ravel J."/>
            <person name="Oekstad O.A."/>
            <person name="Helgason E."/>
            <person name="Cer R.Z."/>
            <person name="Jiang L."/>
            <person name="Shores K.A."/>
            <person name="Fouts D.E."/>
            <person name="Tourasse N.J."/>
            <person name="Angiuoli S.V."/>
            <person name="Kolonay J.F."/>
            <person name="Nelson W.C."/>
            <person name="Kolstoe A.-B."/>
            <person name="Fraser C.M."/>
            <person name="Read T.D."/>
        </authorList>
    </citation>
    <scope>NUCLEOTIDE SEQUENCE [LARGE SCALE GENOMIC DNA]</scope>
    <source>
        <strain>ATCC 10987 / NRS 248</strain>
    </source>
</reference>
<gene>
    <name evidence="1" type="primary">rpsD</name>
    <name type="ordered locus">BCE_4793</name>
</gene>
<evidence type="ECO:0000255" key="1">
    <source>
        <dbReference type="HAMAP-Rule" id="MF_01306"/>
    </source>
</evidence>
<evidence type="ECO:0000256" key="2">
    <source>
        <dbReference type="SAM" id="MobiDB-lite"/>
    </source>
</evidence>
<evidence type="ECO:0000305" key="3"/>
<accession>Q72Z76</accession>